<dbReference type="EMBL" id="CP000487">
    <property type="protein sequence ID" value="ABK82459.1"/>
    <property type="molecule type" value="Genomic_DNA"/>
</dbReference>
<dbReference type="RefSeq" id="WP_011731670.1">
    <property type="nucleotide sequence ID" value="NC_008599.1"/>
</dbReference>
<dbReference type="SMR" id="A0RLX8"/>
<dbReference type="KEGG" id="cff:CFF8240_0001"/>
<dbReference type="PATRIC" id="fig|360106.6.peg.1"/>
<dbReference type="eggNOG" id="COG0593">
    <property type="taxonomic scope" value="Bacteria"/>
</dbReference>
<dbReference type="HOGENOM" id="CLU_026910_3_1_7"/>
<dbReference type="Proteomes" id="UP000000760">
    <property type="component" value="Chromosome"/>
</dbReference>
<dbReference type="GO" id="GO:0005737">
    <property type="term" value="C:cytoplasm"/>
    <property type="evidence" value="ECO:0007669"/>
    <property type="project" value="UniProtKB-SubCell"/>
</dbReference>
<dbReference type="GO" id="GO:0005886">
    <property type="term" value="C:plasma membrane"/>
    <property type="evidence" value="ECO:0007669"/>
    <property type="project" value="TreeGrafter"/>
</dbReference>
<dbReference type="GO" id="GO:0005524">
    <property type="term" value="F:ATP binding"/>
    <property type="evidence" value="ECO:0007669"/>
    <property type="project" value="UniProtKB-UniRule"/>
</dbReference>
<dbReference type="GO" id="GO:0016887">
    <property type="term" value="F:ATP hydrolysis activity"/>
    <property type="evidence" value="ECO:0007669"/>
    <property type="project" value="InterPro"/>
</dbReference>
<dbReference type="GO" id="GO:0003688">
    <property type="term" value="F:DNA replication origin binding"/>
    <property type="evidence" value="ECO:0007669"/>
    <property type="project" value="UniProtKB-UniRule"/>
</dbReference>
<dbReference type="GO" id="GO:0008289">
    <property type="term" value="F:lipid binding"/>
    <property type="evidence" value="ECO:0007669"/>
    <property type="project" value="UniProtKB-KW"/>
</dbReference>
<dbReference type="GO" id="GO:0006270">
    <property type="term" value="P:DNA replication initiation"/>
    <property type="evidence" value="ECO:0007669"/>
    <property type="project" value="UniProtKB-UniRule"/>
</dbReference>
<dbReference type="GO" id="GO:0006275">
    <property type="term" value="P:regulation of DNA replication"/>
    <property type="evidence" value="ECO:0007669"/>
    <property type="project" value="UniProtKB-UniRule"/>
</dbReference>
<dbReference type="CDD" id="cd00009">
    <property type="entry name" value="AAA"/>
    <property type="match status" value="1"/>
</dbReference>
<dbReference type="CDD" id="cd06571">
    <property type="entry name" value="Bac_DnaA_C"/>
    <property type="match status" value="1"/>
</dbReference>
<dbReference type="FunFam" id="3.40.50.300:FF:000668">
    <property type="entry name" value="Chromosomal replication initiator protein DnaA"/>
    <property type="match status" value="1"/>
</dbReference>
<dbReference type="Gene3D" id="1.10.1750.10">
    <property type="match status" value="1"/>
</dbReference>
<dbReference type="Gene3D" id="1.10.8.60">
    <property type="match status" value="1"/>
</dbReference>
<dbReference type="Gene3D" id="3.30.300.180">
    <property type="match status" value="1"/>
</dbReference>
<dbReference type="Gene3D" id="3.40.50.300">
    <property type="entry name" value="P-loop containing nucleotide triphosphate hydrolases"/>
    <property type="match status" value="1"/>
</dbReference>
<dbReference type="HAMAP" id="MF_00377">
    <property type="entry name" value="DnaA_bact"/>
    <property type="match status" value="1"/>
</dbReference>
<dbReference type="InterPro" id="IPR003593">
    <property type="entry name" value="AAA+_ATPase"/>
</dbReference>
<dbReference type="InterPro" id="IPR001957">
    <property type="entry name" value="Chromosome_initiator_DnaA"/>
</dbReference>
<dbReference type="InterPro" id="IPR020591">
    <property type="entry name" value="Chromosome_initiator_DnaA-like"/>
</dbReference>
<dbReference type="InterPro" id="IPR018312">
    <property type="entry name" value="Chromosome_initiator_DnaA_CS"/>
</dbReference>
<dbReference type="InterPro" id="IPR013159">
    <property type="entry name" value="DnaA_C"/>
</dbReference>
<dbReference type="InterPro" id="IPR013317">
    <property type="entry name" value="DnaA_dom"/>
</dbReference>
<dbReference type="InterPro" id="IPR024633">
    <property type="entry name" value="DnaA_N_dom"/>
</dbReference>
<dbReference type="InterPro" id="IPR038454">
    <property type="entry name" value="DnaA_N_sf"/>
</dbReference>
<dbReference type="InterPro" id="IPR027417">
    <property type="entry name" value="P-loop_NTPase"/>
</dbReference>
<dbReference type="InterPro" id="IPR010921">
    <property type="entry name" value="Trp_repressor/repl_initiator"/>
</dbReference>
<dbReference type="NCBIfam" id="TIGR00362">
    <property type="entry name" value="DnaA"/>
    <property type="match status" value="1"/>
</dbReference>
<dbReference type="PANTHER" id="PTHR30050">
    <property type="entry name" value="CHROMOSOMAL REPLICATION INITIATOR PROTEIN DNAA"/>
    <property type="match status" value="1"/>
</dbReference>
<dbReference type="PANTHER" id="PTHR30050:SF2">
    <property type="entry name" value="CHROMOSOMAL REPLICATION INITIATOR PROTEIN DNAA"/>
    <property type="match status" value="1"/>
</dbReference>
<dbReference type="Pfam" id="PF00308">
    <property type="entry name" value="Bac_DnaA"/>
    <property type="match status" value="1"/>
</dbReference>
<dbReference type="Pfam" id="PF08299">
    <property type="entry name" value="Bac_DnaA_C"/>
    <property type="match status" value="1"/>
</dbReference>
<dbReference type="Pfam" id="PF11638">
    <property type="entry name" value="DnaA_N"/>
    <property type="match status" value="1"/>
</dbReference>
<dbReference type="PRINTS" id="PR00051">
    <property type="entry name" value="DNAA"/>
</dbReference>
<dbReference type="SMART" id="SM00382">
    <property type="entry name" value="AAA"/>
    <property type="match status" value="1"/>
</dbReference>
<dbReference type="SMART" id="SM00760">
    <property type="entry name" value="Bac_DnaA_C"/>
    <property type="match status" value="1"/>
</dbReference>
<dbReference type="SUPFAM" id="SSF52540">
    <property type="entry name" value="P-loop containing nucleoside triphosphate hydrolases"/>
    <property type="match status" value="1"/>
</dbReference>
<dbReference type="SUPFAM" id="SSF48295">
    <property type="entry name" value="TrpR-like"/>
    <property type="match status" value="1"/>
</dbReference>
<dbReference type="PROSITE" id="PS01008">
    <property type="entry name" value="DNAA"/>
    <property type="match status" value="1"/>
</dbReference>
<gene>
    <name evidence="1" type="primary">dnaA</name>
    <name type="ordered locus">CFF8240_0001</name>
</gene>
<feature type="chain" id="PRO_1000048627" description="Chromosomal replication initiator protein DnaA">
    <location>
        <begin position="1"/>
        <end position="436"/>
    </location>
</feature>
<feature type="region of interest" description="Domain I, interacts with DnaA modulators" evidence="1">
    <location>
        <begin position="1"/>
        <end position="69"/>
    </location>
</feature>
<feature type="region of interest" description="Domain II" evidence="1">
    <location>
        <begin position="69"/>
        <end position="99"/>
    </location>
</feature>
<feature type="region of interest" description="Domain III, AAA+ region" evidence="1">
    <location>
        <begin position="100"/>
        <end position="314"/>
    </location>
</feature>
<feature type="region of interest" description="Domain IV, binds dsDNA" evidence="1">
    <location>
        <begin position="315"/>
        <end position="436"/>
    </location>
</feature>
<feature type="binding site" evidence="1">
    <location>
        <position position="144"/>
    </location>
    <ligand>
        <name>ATP</name>
        <dbReference type="ChEBI" id="CHEBI:30616"/>
    </ligand>
</feature>
<feature type="binding site" evidence="1">
    <location>
        <position position="146"/>
    </location>
    <ligand>
        <name>ATP</name>
        <dbReference type="ChEBI" id="CHEBI:30616"/>
    </ligand>
</feature>
<feature type="binding site" evidence="1">
    <location>
        <position position="147"/>
    </location>
    <ligand>
        <name>ATP</name>
        <dbReference type="ChEBI" id="CHEBI:30616"/>
    </ligand>
</feature>
<feature type="binding site" evidence="1">
    <location>
        <position position="148"/>
    </location>
    <ligand>
        <name>ATP</name>
        <dbReference type="ChEBI" id="CHEBI:30616"/>
    </ligand>
</feature>
<accession>A0RLX8</accession>
<proteinExistence type="inferred from homology"/>
<organism>
    <name type="scientific">Campylobacter fetus subsp. fetus (strain 82-40)</name>
    <dbReference type="NCBI Taxonomy" id="360106"/>
    <lineage>
        <taxon>Bacteria</taxon>
        <taxon>Pseudomonadati</taxon>
        <taxon>Campylobacterota</taxon>
        <taxon>Epsilonproteobacteria</taxon>
        <taxon>Campylobacterales</taxon>
        <taxon>Campylobacteraceae</taxon>
        <taxon>Campylobacter</taxon>
    </lineage>
</organism>
<keyword id="KW-0067">ATP-binding</keyword>
<keyword id="KW-0963">Cytoplasm</keyword>
<keyword id="KW-0235">DNA replication</keyword>
<keyword id="KW-0238">DNA-binding</keyword>
<keyword id="KW-0446">Lipid-binding</keyword>
<keyword id="KW-0547">Nucleotide-binding</keyword>
<evidence type="ECO:0000255" key="1">
    <source>
        <dbReference type="HAMAP-Rule" id="MF_00377"/>
    </source>
</evidence>
<name>DNAA_CAMFF</name>
<comment type="function">
    <text evidence="1">Plays an essential role in the initiation and regulation of chromosomal replication. ATP-DnaA binds to the origin of replication (oriC) to initiate formation of the DNA replication initiation complex once per cell cycle. Binds the DnaA box (a 9 base pair repeat at the origin) and separates the double-stranded (ds)DNA. Forms a right-handed helical filament on oriC DNA; dsDNA binds to the exterior of the filament while single-stranded (ss)DNA is stabiized in the filament's interior. The ATP-DnaA-oriC complex binds and stabilizes one strand of the AT-rich DNA unwinding element (DUE), permitting loading of DNA polymerase. After initiation quickly degrades to an ADP-DnaA complex that is not apt for DNA replication. Binds acidic phospholipids.</text>
</comment>
<comment type="subunit">
    <text evidence="1">Oligomerizes as a right-handed, spiral filament on DNA at oriC.</text>
</comment>
<comment type="subcellular location">
    <subcellularLocation>
        <location evidence="1">Cytoplasm</location>
    </subcellularLocation>
</comment>
<comment type="domain">
    <text evidence="1">Domain I is involved in oligomerization and binding regulators, domain II is flexibile and of varying length in different bacteria, domain III forms the AAA+ region, while domain IV binds dsDNA.</text>
</comment>
<comment type="similarity">
    <text evidence="1">Belongs to the DnaA family.</text>
</comment>
<reference key="1">
    <citation type="submission" date="2006-11" db="EMBL/GenBank/DDBJ databases">
        <title>Sequence of Campylobacter fetus subsp. fetus 82-40.</title>
        <authorList>
            <person name="Fouts D.E."/>
            <person name="Nelson K.E."/>
        </authorList>
    </citation>
    <scope>NUCLEOTIDE SEQUENCE [LARGE SCALE GENOMIC DNA]</scope>
    <source>
        <strain>82-40</strain>
    </source>
</reference>
<protein>
    <recommendedName>
        <fullName evidence="1">Chromosomal replication initiator protein DnaA</fullName>
    </recommendedName>
</protein>
<sequence length="436" mass="49879">MLADEVIELLGQEISKNEMENYISQIKFNEKSSNSENIIFTAPNELVTKFIQTRYANKIANIFEVKTGIKPVISITTQKNRVSIKAKDIDVKQIRTQSSLLNPSYTFESFVVGDSNQFAYISSQQAAQNPGKVYNPLFIYGSTGLGKTHLLQSIGNYCLEHGKTVICVTSEQFMSDFIRNVENRTMNKFKEKYRNCDILLIDDIQFFHKSEKTQEEFFHTFNEIHAKKGQIVMTSDKPPKMLKGFEERLKSRFEWGLMADITPPELDTKIRIIKAKCEFDGINLSSDIIEYIATNMGDNIREIESAIININAFANIMRQEITLEFAKNVIKDQIKEKKDNISLENIISCVSHEMNIKPSDIKSKSRTKGIVEARRICIYLAKTLTPNSMPQLATHFGLKDHSAVSHNIKKINEIINNDGYFKARVEELKNKITSKE</sequence>